<comment type="similarity">
    <text evidence="1">Belongs to the bacterial ribosomal protein bL36 family.</text>
</comment>
<proteinExistence type="inferred from homology"/>
<dbReference type="EMBL" id="CP001344">
    <property type="protein sequence ID" value="ACL43690.1"/>
    <property type="molecule type" value="Genomic_DNA"/>
</dbReference>
<dbReference type="SMR" id="B8HMS5"/>
<dbReference type="STRING" id="395961.Cyan7425_1313"/>
<dbReference type="KEGG" id="cyn:Cyan7425_1313"/>
<dbReference type="eggNOG" id="COG0257">
    <property type="taxonomic scope" value="Bacteria"/>
</dbReference>
<dbReference type="HOGENOM" id="CLU_135723_6_2_3"/>
<dbReference type="OrthoDB" id="9802520at2"/>
<dbReference type="GO" id="GO:0005737">
    <property type="term" value="C:cytoplasm"/>
    <property type="evidence" value="ECO:0007669"/>
    <property type="project" value="UniProtKB-ARBA"/>
</dbReference>
<dbReference type="GO" id="GO:1990904">
    <property type="term" value="C:ribonucleoprotein complex"/>
    <property type="evidence" value="ECO:0007669"/>
    <property type="project" value="UniProtKB-KW"/>
</dbReference>
<dbReference type="GO" id="GO:0005840">
    <property type="term" value="C:ribosome"/>
    <property type="evidence" value="ECO:0007669"/>
    <property type="project" value="UniProtKB-KW"/>
</dbReference>
<dbReference type="GO" id="GO:0003735">
    <property type="term" value="F:structural constituent of ribosome"/>
    <property type="evidence" value="ECO:0007669"/>
    <property type="project" value="InterPro"/>
</dbReference>
<dbReference type="GO" id="GO:0006412">
    <property type="term" value="P:translation"/>
    <property type="evidence" value="ECO:0007669"/>
    <property type="project" value="UniProtKB-UniRule"/>
</dbReference>
<dbReference type="HAMAP" id="MF_00251">
    <property type="entry name" value="Ribosomal_bL36"/>
    <property type="match status" value="1"/>
</dbReference>
<dbReference type="InterPro" id="IPR000473">
    <property type="entry name" value="Ribosomal_bL36"/>
</dbReference>
<dbReference type="InterPro" id="IPR035977">
    <property type="entry name" value="Ribosomal_bL36_sp"/>
</dbReference>
<dbReference type="NCBIfam" id="TIGR01022">
    <property type="entry name" value="rpmJ_bact"/>
    <property type="match status" value="1"/>
</dbReference>
<dbReference type="PANTHER" id="PTHR42888">
    <property type="entry name" value="50S RIBOSOMAL PROTEIN L36, CHLOROPLASTIC"/>
    <property type="match status" value="1"/>
</dbReference>
<dbReference type="PANTHER" id="PTHR42888:SF1">
    <property type="entry name" value="LARGE RIBOSOMAL SUBUNIT PROTEIN BL36C"/>
    <property type="match status" value="1"/>
</dbReference>
<dbReference type="Pfam" id="PF00444">
    <property type="entry name" value="Ribosomal_L36"/>
    <property type="match status" value="1"/>
</dbReference>
<dbReference type="SUPFAM" id="SSF57840">
    <property type="entry name" value="Ribosomal protein L36"/>
    <property type="match status" value="1"/>
</dbReference>
<dbReference type="PROSITE" id="PS00828">
    <property type="entry name" value="RIBOSOMAL_L36"/>
    <property type="match status" value="1"/>
</dbReference>
<feature type="chain" id="PRO_1000196183" description="Large ribosomal subunit protein bL36">
    <location>
        <begin position="1"/>
        <end position="37"/>
    </location>
</feature>
<accession>B8HMS5</accession>
<gene>
    <name evidence="1" type="primary">rpmJ</name>
    <name type="ordered locus">Cyan7425_1313</name>
</gene>
<keyword id="KW-0687">Ribonucleoprotein</keyword>
<keyword id="KW-0689">Ribosomal protein</keyword>
<reference key="1">
    <citation type="journal article" date="2011" name="MBio">
        <title>Novel metabolic attributes of the genus Cyanothece, comprising a group of unicellular nitrogen-fixing Cyanobacteria.</title>
        <authorList>
            <person name="Bandyopadhyay A."/>
            <person name="Elvitigala T."/>
            <person name="Welsh E."/>
            <person name="Stockel J."/>
            <person name="Liberton M."/>
            <person name="Min H."/>
            <person name="Sherman L.A."/>
            <person name="Pakrasi H.B."/>
        </authorList>
    </citation>
    <scope>NUCLEOTIDE SEQUENCE [LARGE SCALE GENOMIC DNA]</scope>
    <source>
        <strain>PCC 7425 / ATCC 29141</strain>
    </source>
</reference>
<evidence type="ECO:0000255" key="1">
    <source>
        <dbReference type="HAMAP-Rule" id="MF_00251"/>
    </source>
</evidence>
<evidence type="ECO:0000305" key="2"/>
<protein>
    <recommendedName>
        <fullName evidence="1">Large ribosomal subunit protein bL36</fullName>
    </recommendedName>
    <alternativeName>
        <fullName evidence="2">50S ribosomal protein L36</fullName>
    </alternativeName>
</protein>
<name>RL36_CYAP4</name>
<organism>
    <name type="scientific">Cyanothece sp. (strain PCC 7425 / ATCC 29141)</name>
    <dbReference type="NCBI Taxonomy" id="395961"/>
    <lineage>
        <taxon>Bacteria</taxon>
        <taxon>Bacillati</taxon>
        <taxon>Cyanobacteriota</taxon>
        <taxon>Cyanophyceae</taxon>
        <taxon>Gomontiellales</taxon>
        <taxon>Cyanothecaceae</taxon>
        <taxon>Cyanothece</taxon>
    </lineage>
</organism>
<sequence length="37" mass="4392">MKVRASVRRICEKCRVIRRKGRVMVICANPKHKQRQG</sequence>